<reference key="1">
    <citation type="journal article" date="2003" name="Nature">
        <title>Unique physiological and pathogenic features of Leptospira interrogans revealed by whole-genome sequencing.</title>
        <authorList>
            <person name="Ren S.-X."/>
            <person name="Fu G."/>
            <person name="Jiang X.-G."/>
            <person name="Zeng R."/>
            <person name="Miao Y.-G."/>
            <person name="Xu H."/>
            <person name="Zhang Y.-X."/>
            <person name="Xiong H."/>
            <person name="Lu G."/>
            <person name="Lu L.-F."/>
            <person name="Jiang H.-Q."/>
            <person name="Jia J."/>
            <person name="Tu Y.-F."/>
            <person name="Jiang J.-X."/>
            <person name="Gu W.-Y."/>
            <person name="Zhang Y.-Q."/>
            <person name="Cai Z."/>
            <person name="Sheng H.-H."/>
            <person name="Yin H.-F."/>
            <person name="Zhang Y."/>
            <person name="Zhu G.-F."/>
            <person name="Wan M."/>
            <person name="Huang H.-L."/>
            <person name="Qian Z."/>
            <person name="Wang S.-Y."/>
            <person name="Ma W."/>
            <person name="Yao Z.-J."/>
            <person name="Shen Y."/>
            <person name="Qiang B.-Q."/>
            <person name="Xia Q.-C."/>
            <person name="Guo X.-K."/>
            <person name="Danchin A."/>
            <person name="Saint Girons I."/>
            <person name="Somerville R.L."/>
            <person name="Wen Y.-M."/>
            <person name="Shi M.-H."/>
            <person name="Chen Z."/>
            <person name="Xu J.-G."/>
            <person name="Zhao G.-P."/>
        </authorList>
    </citation>
    <scope>NUCLEOTIDE SEQUENCE [LARGE SCALE GENOMIC DNA]</scope>
    <source>
        <strain>56601</strain>
    </source>
</reference>
<feature type="chain" id="PRO_0000142019" description="1-(5-phosphoribosyl)-5-[(5-phosphoribosylamino)methylideneamino] imidazole-4-carboxamide isomerase">
    <location>
        <begin position="1"/>
        <end position="241"/>
    </location>
</feature>
<feature type="active site" description="Proton acceptor" evidence="1">
    <location>
        <position position="8"/>
    </location>
</feature>
<feature type="active site" description="Proton donor" evidence="1">
    <location>
        <position position="130"/>
    </location>
</feature>
<organism>
    <name type="scientific">Leptospira interrogans serogroup Icterohaemorrhagiae serovar Lai (strain 56601)</name>
    <dbReference type="NCBI Taxonomy" id="189518"/>
    <lineage>
        <taxon>Bacteria</taxon>
        <taxon>Pseudomonadati</taxon>
        <taxon>Spirochaetota</taxon>
        <taxon>Spirochaetia</taxon>
        <taxon>Leptospirales</taxon>
        <taxon>Leptospiraceae</taxon>
        <taxon>Leptospira</taxon>
    </lineage>
</organism>
<protein>
    <recommendedName>
        <fullName evidence="1">1-(5-phosphoribosyl)-5-[(5-phosphoribosylamino)methylideneamino] imidazole-4-carboxamide isomerase</fullName>
        <ecNumber evidence="1">5.3.1.16</ecNumber>
    </recommendedName>
    <alternativeName>
        <fullName evidence="1">Phosphoribosylformimino-5-aminoimidazole carboxamide ribotide isomerase</fullName>
    </alternativeName>
</protein>
<proteinExistence type="inferred from homology"/>
<evidence type="ECO:0000255" key="1">
    <source>
        <dbReference type="HAMAP-Rule" id="MF_01014"/>
    </source>
</evidence>
<gene>
    <name evidence="1" type="primary">hisA</name>
    <name type="ordered locus">LA_0126</name>
</gene>
<keyword id="KW-0028">Amino-acid biosynthesis</keyword>
<keyword id="KW-0963">Cytoplasm</keyword>
<keyword id="KW-0368">Histidine biosynthesis</keyword>
<keyword id="KW-0413">Isomerase</keyword>
<keyword id="KW-1185">Reference proteome</keyword>
<accession>Q8F9R5</accession>
<sequence>MIVIPAIDLFDNCAVRLFKGNYEEKKIYSSEPWKLAESFAKNGATLLHLVDLNGARNQLGVNEDSILKIRETTSLKVQLGGGIRDKEKLAYYDKIGINRFILGTAAVTNPDLLKYALDNYGKERVVVAVDARDGIVKIAGWEKDSGIHYRDLLERLVKAGIEHIVFTDIAQDGTLAGPNLEAYREILNSYPFQVIASGGIASLKDLMDLSSLKTKISLYGVITGKALYEGKLDLAKAISSI</sequence>
<comment type="catalytic activity">
    <reaction evidence="1">
        <text>1-(5-phospho-beta-D-ribosyl)-5-[(5-phospho-beta-D-ribosylamino)methylideneamino]imidazole-4-carboxamide = 5-[(5-phospho-1-deoxy-D-ribulos-1-ylimino)methylamino]-1-(5-phospho-beta-D-ribosyl)imidazole-4-carboxamide</text>
        <dbReference type="Rhea" id="RHEA:15469"/>
        <dbReference type="ChEBI" id="CHEBI:58435"/>
        <dbReference type="ChEBI" id="CHEBI:58525"/>
        <dbReference type="EC" id="5.3.1.16"/>
    </reaction>
</comment>
<comment type="pathway">
    <text evidence="1">Amino-acid biosynthesis; L-histidine biosynthesis; L-histidine from 5-phospho-alpha-D-ribose 1-diphosphate: step 4/9.</text>
</comment>
<comment type="subcellular location">
    <subcellularLocation>
        <location evidence="1">Cytoplasm</location>
    </subcellularLocation>
</comment>
<comment type="similarity">
    <text evidence="1">Belongs to the HisA/HisF family.</text>
</comment>
<dbReference type="EC" id="5.3.1.16" evidence="1"/>
<dbReference type="EMBL" id="AE010300">
    <property type="protein sequence ID" value="AAN47325.1"/>
    <property type="molecule type" value="Genomic_DNA"/>
</dbReference>
<dbReference type="RefSeq" id="NP_710307.1">
    <property type="nucleotide sequence ID" value="NC_004342.2"/>
</dbReference>
<dbReference type="RefSeq" id="WP_000635440.1">
    <property type="nucleotide sequence ID" value="NC_004342.2"/>
</dbReference>
<dbReference type="SMR" id="Q8F9R5"/>
<dbReference type="FunCoup" id="Q8F9R5">
    <property type="interactions" value="414"/>
</dbReference>
<dbReference type="STRING" id="189518.LA_0126"/>
<dbReference type="PaxDb" id="189518-LA_0126"/>
<dbReference type="EnsemblBacteria" id="AAN47325">
    <property type="protein sequence ID" value="AAN47325"/>
    <property type="gene ID" value="LA_0126"/>
</dbReference>
<dbReference type="GeneID" id="61143469"/>
<dbReference type="KEGG" id="lil:LA_0126"/>
<dbReference type="PATRIC" id="fig|189518.3.peg.129"/>
<dbReference type="HOGENOM" id="CLU_048577_1_2_12"/>
<dbReference type="InParanoid" id="Q8F9R5"/>
<dbReference type="OrthoDB" id="9781903at2"/>
<dbReference type="UniPathway" id="UPA00031">
    <property type="reaction ID" value="UER00009"/>
</dbReference>
<dbReference type="Proteomes" id="UP000001408">
    <property type="component" value="Chromosome I"/>
</dbReference>
<dbReference type="GO" id="GO:0005737">
    <property type="term" value="C:cytoplasm"/>
    <property type="evidence" value="ECO:0000318"/>
    <property type="project" value="GO_Central"/>
</dbReference>
<dbReference type="GO" id="GO:0003949">
    <property type="term" value="F:1-(5-phosphoribosyl)-5-[(5-phosphoribosylamino)methylideneamino]imidazole-4-carboxamide isomerase activity"/>
    <property type="evidence" value="ECO:0000318"/>
    <property type="project" value="GO_Central"/>
</dbReference>
<dbReference type="GO" id="GO:0000105">
    <property type="term" value="P:L-histidine biosynthetic process"/>
    <property type="evidence" value="ECO:0000318"/>
    <property type="project" value="GO_Central"/>
</dbReference>
<dbReference type="CDD" id="cd04732">
    <property type="entry name" value="HisA"/>
    <property type="match status" value="1"/>
</dbReference>
<dbReference type="FunFam" id="3.20.20.70:FF:000009">
    <property type="entry name" value="1-(5-phosphoribosyl)-5-[(5-phosphoribosylamino)methylideneamino] imidazole-4-carboxamide isomerase"/>
    <property type="match status" value="1"/>
</dbReference>
<dbReference type="Gene3D" id="3.20.20.70">
    <property type="entry name" value="Aldolase class I"/>
    <property type="match status" value="1"/>
</dbReference>
<dbReference type="HAMAP" id="MF_01014">
    <property type="entry name" value="HisA"/>
    <property type="match status" value="1"/>
</dbReference>
<dbReference type="InterPro" id="IPR013785">
    <property type="entry name" value="Aldolase_TIM"/>
</dbReference>
<dbReference type="InterPro" id="IPR006062">
    <property type="entry name" value="His_biosynth"/>
</dbReference>
<dbReference type="InterPro" id="IPR006063">
    <property type="entry name" value="HisA_bact_arch"/>
</dbReference>
<dbReference type="InterPro" id="IPR044524">
    <property type="entry name" value="Isoase_HisA-like"/>
</dbReference>
<dbReference type="InterPro" id="IPR023016">
    <property type="entry name" value="Isoase_HisA-like_bact"/>
</dbReference>
<dbReference type="InterPro" id="IPR011060">
    <property type="entry name" value="RibuloseP-bd_barrel"/>
</dbReference>
<dbReference type="NCBIfam" id="TIGR00007">
    <property type="entry name" value="1-(5-phosphoribosyl)-5-[(5-phosphoribosylamino)methylideneamino]imidazole-4-carboxamide isomerase"/>
    <property type="match status" value="1"/>
</dbReference>
<dbReference type="PANTHER" id="PTHR43090">
    <property type="entry name" value="1-(5-PHOSPHORIBOSYL)-5-[(5-PHOSPHORIBOSYLAMINO)METHYLIDENEAMINO] IMIDAZOLE-4-CARBOXAMIDE ISOMERASE"/>
    <property type="match status" value="1"/>
</dbReference>
<dbReference type="PANTHER" id="PTHR43090:SF2">
    <property type="entry name" value="1-(5-PHOSPHORIBOSYL)-5-[(5-PHOSPHORIBOSYLAMINO)METHYLIDENEAMINO] IMIDAZOLE-4-CARBOXAMIDE ISOMERASE"/>
    <property type="match status" value="1"/>
</dbReference>
<dbReference type="Pfam" id="PF00977">
    <property type="entry name" value="His_biosynth"/>
    <property type="match status" value="1"/>
</dbReference>
<dbReference type="SUPFAM" id="SSF51366">
    <property type="entry name" value="Ribulose-phoshate binding barrel"/>
    <property type="match status" value="1"/>
</dbReference>
<name>HIS4_LEPIN</name>